<sequence length="202" mass="22238">MTSPANPSEVTRDRRNRGVAFVCAGVFVAMVGMSFAAVPLYRLFCQVTGYGGTTQRVEQYSDTILDRTINVRFDANTSGVPWEFKPKQREITLRIGETTEIAYVARNNAPTTTTGTATYNVAPALAGAYFNKIECFCFTKQSLEPGQTYEMPVQFFVDPEIVNVPELKNLKTITLSYTFYPNNQESAEGPAEGAAKTQKLGG</sequence>
<protein>
    <recommendedName>
        <fullName evidence="1">Cytochrome c oxidase assembly protein CtaG</fullName>
    </recommendedName>
</protein>
<gene>
    <name evidence="1" type="primary">ctaG</name>
    <name type="ordered locus">Meso_0745</name>
</gene>
<dbReference type="EMBL" id="CP000390">
    <property type="protein sequence ID" value="ABG62145.1"/>
    <property type="molecule type" value="Genomic_DNA"/>
</dbReference>
<dbReference type="SMR" id="Q11KD0"/>
<dbReference type="STRING" id="266779.Meso_0745"/>
<dbReference type="KEGG" id="mes:Meso_0745"/>
<dbReference type="eggNOG" id="COG3175">
    <property type="taxonomic scope" value="Bacteria"/>
</dbReference>
<dbReference type="HOGENOM" id="CLU_045000_5_0_5"/>
<dbReference type="OrthoDB" id="9804841at2"/>
<dbReference type="GO" id="GO:0005886">
    <property type="term" value="C:plasma membrane"/>
    <property type="evidence" value="ECO:0007669"/>
    <property type="project" value="UniProtKB-SubCell"/>
</dbReference>
<dbReference type="GO" id="GO:0005507">
    <property type="term" value="F:copper ion binding"/>
    <property type="evidence" value="ECO:0007669"/>
    <property type="project" value="InterPro"/>
</dbReference>
<dbReference type="GO" id="GO:0008535">
    <property type="term" value="P:respiratory chain complex IV assembly"/>
    <property type="evidence" value="ECO:0007669"/>
    <property type="project" value="UniProtKB-UniRule"/>
</dbReference>
<dbReference type="FunFam" id="2.60.370.10:FF:000001">
    <property type="entry name" value="COX11 cytochrome c oxidase assembly homolog"/>
    <property type="match status" value="1"/>
</dbReference>
<dbReference type="Gene3D" id="2.60.370.10">
    <property type="entry name" value="Ctag/Cox11"/>
    <property type="match status" value="1"/>
</dbReference>
<dbReference type="HAMAP" id="MF_00155">
    <property type="entry name" value="CtaG"/>
    <property type="match status" value="1"/>
</dbReference>
<dbReference type="InterPro" id="IPR023471">
    <property type="entry name" value="CtaG/Cox11_dom_sf"/>
</dbReference>
<dbReference type="InterPro" id="IPR007533">
    <property type="entry name" value="Cyt_c_oxidase_assmbl_CtaG"/>
</dbReference>
<dbReference type="NCBIfam" id="NF003465">
    <property type="entry name" value="PRK05089.1"/>
    <property type="match status" value="1"/>
</dbReference>
<dbReference type="PANTHER" id="PTHR21320:SF3">
    <property type="entry name" value="CYTOCHROME C OXIDASE ASSEMBLY PROTEIN COX11, MITOCHONDRIAL-RELATED"/>
    <property type="match status" value="1"/>
</dbReference>
<dbReference type="PANTHER" id="PTHR21320">
    <property type="entry name" value="CYTOCHROME C OXIDASE ASSEMBLY PROTEIN COX11-RELATED"/>
    <property type="match status" value="1"/>
</dbReference>
<dbReference type="Pfam" id="PF04442">
    <property type="entry name" value="CtaG_Cox11"/>
    <property type="match status" value="1"/>
</dbReference>
<dbReference type="PIRSF" id="PIRSF005413">
    <property type="entry name" value="COX11"/>
    <property type="match status" value="1"/>
</dbReference>
<dbReference type="SUPFAM" id="SSF110111">
    <property type="entry name" value="Ctag/Cox11"/>
    <property type="match status" value="1"/>
</dbReference>
<comment type="function">
    <text evidence="1">Exerts its effect at some terminal stage of cytochrome c oxidase synthesis, probably by being involved in the insertion of the copper B into subunit I.</text>
</comment>
<comment type="subcellular location">
    <subcellularLocation>
        <location evidence="1">Cell inner membrane</location>
        <topology evidence="1">Single-pass type II membrane protein</topology>
        <orientation evidence="1">Periplasmic side</orientation>
    </subcellularLocation>
</comment>
<comment type="similarity">
    <text evidence="1">Belongs to the COX11/CtaG family.</text>
</comment>
<evidence type="ECO:0000255" key="1">
    <source>
        <dbReference type="HAMAP-Rule" id="MF_00155"/>
    </source>
</evidence>
<organism>
    <name type="scientific">Chelativorans sp. (strain BNC1)</name>
    <dbReference type="NCBI Taxonomy" id="266779"/>
    <lineage>
        <taxon>Bacteria</taxon>
        <taxon>Pseudomonadati</taxon>
        <taxon>Pseudomonadota</taxon>
        <taxon>Alphaproteobacteria</taxon>
        <taxon>Hyphomicrobiales</taxon>
        <taxon>Phyllobacteriaceae</taxon>
        <taxon>Chelativorans</taxon>
    </lineage>
</organism>
<proteinExistence type="inferred from homology"/>
<name>COXZ_CHESB</name>
<accession>Q11KD0</accession>
<reference key="1">
    <citation type="submission" date="2006-06" db="EMBL/GenBank/DDBJ databases">
        <title>Complete sequence of chromosome of Mesorhizobium sp. BNC1.</title>
        <authorList>
            <consortium name="US DOE Joint Genome Institute"/>
            <person name="Copeland A."/>
            <person name="Lucas S."/>
            <person name="Lapidus A."/>
            <person name="Barry K."/>
            <person name="Detter J.C."/>
            <person name="Glavina del Rio T."/>
            <person name="Hammon N."/>
            <person name="Israni S."/>
            <person name="Dalin E."/>
            <person name="Tice H."/>
            <person name="Pitluck S."/>
            <person name="Chertkov O."/>
            <person name="Brettin T."/>
            <person name="Bruce D."/>
            <person name="Han C."/>
            <person name="Tapia R."/>
            <person name="Gilna P."/>
            <person name="Schmutz J."/>
            <person name="Larimer F."/>
            <person name="Land M."/>
            <person name="Hauser L."/>
            <person name="Kyrpides N."/>
            <person name="Mikhailova N."/>
            <person name="Richardson P."/>
        </authorList>
    </citation>
    <scope>NUCLEOTIDE SEQUENCE [LARGE SCALE GENOMIC DNA]</scope>
    <source>
        <strain>BNC1</strain>
    </source>
</reference>
<feature type="chain" id="PRO_0000311200" description="Cytochrome c oxidase assembly protein CtaG">
    <location>
        <begin position="1"/>
        <end position="202"/>
    </location>
</feature>
<feature type="topological domain" description="Cytoplasmic" evidence="1">
    <location>
        <begin position="1"/>
        <end position="14"/>
    </location>
</feature>
<feature type="transmembrane region" description="Helical; Signal-anchor for type II membrane protein" evidence="1">
    <location>
        <begin position="15"/>
        <end position="37"/>
    </location>
</feature>
<feature type="topological domain" description="Periplasmic" evidence="1">
    <location>
        <begin position="38"/>
        <end position="202"/>
    </location>
</feature>
<keyword id="KW-0997">Cell inner membrane</keyword>
<keyword id="KW-1003">Cell membrane</keyword>
<keyword id="KW-0186">Copper</keyword>
<keyword id="KW-0472">Membrane</keyword>
<keyword id="KW-0735">Signal-anchor</keyword>
<keyword id="KW-0812">Transmembrane</keyword>
<keyword id="KW-1133">Transmembrane helix</keyword>